<proteinExistence type="evidence at protein level"/>
<dbReference type="EC" id="1.4.3.3" evidence="8"/>
<dbReference type="EMBL" id="AL939129">
    <property type="protein sequence ID" value="CAB40690.1"/>
    <property type="molecule type" value="Genomic_DNA"/>
</dbReference>
<dbReference type="PIR" id="T35265">
    <property type="entry name" value="T35265"/>
</dbReference>
<dbReference type="RefSeq" id="NP_630813.1">
    <property type="nucleotide sequence ID" value="NC_003888.3"/>
</dbReference>
<dbReference type="RefSeq" id="WP_011031147.1">
    <property type="nucleotide sequence ID" value="NZ_VNID01000002.1"/>
</dbReference>
<dbReference type="SMR" id="Q9X7P6"/>
<dbReference type="FunCoup" id="Q9X7P6">
    <property type="interactions" value="117"/>
</dbReference>
<dbReference type="STRING" id="100226.SCO6740"/>
<dbReference type="PaxDb" id="100226-SCO6740"/>
<dbReference type="KEGG" id="sco:SCO6740"/>
<dbReference type="PATRIC" id="fig|100226.15.peg.6847"/>
<dbReference type="eggNOG" id="COG0665">
    <property type="taxonomic scope" value="Bacteria"/>
</dbReference>
<dbReference type="HOGENOM" id="CLU_034311_0_0_11"/>
<dbReference type="InParanoid" id="Q9X7P6"/>
<dbReference type="OrthoDB" id="246701at2"/>
<dbReference type="PhylomeDB" id="Q9X7P6"/>
<dbReference type="Proteomes" id="UP000001973">
    <property type="component" value="Chromosome"/>
</dbReference>
<dbReference type="GO" id="GO:0005737">
    <property type="term" value="C:cytoplasm"/>
    <property type="evidence" value="ECO:0000250"/>
    <property type="project" value="UniProtKB"/>
</dbReference>
<dbReference type="GO" id="GO:0005576">
    <property type="term" value="C:extracellular region"/>
    <property type="evidence" value="ECO:0007669"/>
    <property type="project" value="UniProtKB-KW"/>
</dbReference>
<dbReference type="GO" id="GO:0009274">
    <property type="term" value="C:peptidoglycan-based cell wall"/>
    <property type="evidence" value="ECO:0000250"/>
    <property type="project" value="UniProtKB"/>
</dbReference>
<dbReference type="GO" id="GO:0003884">
    <property type="term" value="F:D-amino-acid oxidase activity"/>
    <property type="evidence" value="ECO:0000250"/>
    <property type="project" value="UniProtKB"/>
</dbReference>
<dbReference type="GO" id="GO:0071949">
    <property type="term" value="F:FAD binding"/>
    <property type="evidence" value="ECO:0000250"/>
    <property type="project" value="UniProtKB"/>
</dbReference>
<dbReference type="GO" id="GO:0019478">
    <property type="term" value="P:D-amino acid catabolic process"/>
    <property type="evidence" value="ECO:0000250"/>
    <property type="project" value="UniProtKB"/>
</dbReference>
<dbReference type="Gene3D" id="3.30.9.10">
    <property type="entry name" value="D-Amino Acid Oxidase, subunit A, domain 2"/>
    <property type="match status" value="1"/>
</dbReference>
<dbReference type="Gene3D" id="3.40.50.720">
    <property type="entry name" value="NAD(P)-binding Rossmann-like Domain"/>
    <property type="match status" value="1"/>
</dbReference>
<dbReference type="InterPro" id="IPR006181">
    <property type="entry name" value="D-amino_acid_oxidase_CS"/>
</dbReference>
<dbReference type="InterPro" id="IPR023209">
    <property type="entry name" value="DAO"/>
</dbReference>
<dbReference type="InterPro" id="IPR006076">
    <property type="entry name" value="FAD-dep_OxRdtase"/>
</dbReference>
<dbReference type="PANTHER" id="PTHR11530">
    <property type="entry name" value="D-AMINO ACID OXIDASE"/>
    <property type="match status" value="1"/>
</dbReference>
<dbReference type="PANTHER" id="PTHR11530:SF11">
    <property type="entry name" value="D-ASPARTATE OXIDASE"/>
    <property type="match status" value="1"/>
</dbReference>
<dbReference type="Pfam" id="PF01266">
    <property type="entry name" value="DAO"/>
    <property type="match status" value="1"/>
</dbReference>
<dbReference type="PIRSF" id="PIRSF000189">
    <property type="entry name" value="D-aa_oxidase"/>
    <property type="match status" value="1"/>
</dbReference>
<dbReference type="SUPFAM" id="SSF54373">
    <property type="entry name" value="FAD-linked reductases, C-terminal domain"/>
    <property type="match status" value="1"/>
</dbReference>
<dbReference type="SUPFAM" id="SSF51971">
    <property type="entry name" value="Nucleotide-binding domain"/>
    <property type="match status" value="1"/>
</dbReference>
<dbReference type="PROSITE" id="PS00677">
    <property type="entry name" value="DAO"/>
    <property type="match status" value="1"/>
</dbReference>
<sequence length="320" mass="34060">METELDDERDGEVVVVGGGVIGLTTAVVLAERGRRVRLWTREPAERTTSVVAGGLWWPYRIEPVALAQAWALRSLDVYEELAARPGQTGVRMLEGVLGETGLDEVDGWAAARLPGLRAASAAEYAGTGLWARLPLIDMSTHLPWLRERLLAAGGTVEDRAVTDLAEADAPVVVNCTGLGARELVPDPAVRPVRGQLVVVENPGIHNWLVAADADSGETTYFLPQPGRLLLGGTAEEDAWSTEPDPEVAAAIVRRCAALRPEIAGARVLAHLVGLRPARDAVRLERGTLPDGRRLVHNYGHGGAGVTVAWGCAQEAARLAS</sequence>
<gene>
    <name evidence="7" type="primary">dao</name>
    <name evidence="9" type="ordered locus">SCO6740</name>
    <name evidence="9" type="ORF">SC5F2A.23c</name>
</gene>
<reference evidence="10" key="1">
    <citation type="journal article" date="2002" name="Nature">
        <title>Complete genome sequence of the model actinomycete Streptomyces coelicolor A3(2).</title>
        <authorList>
            <person name="Bentley S.D."/>
            <person name="Chater K.F."/>
            <person name="Cerdeno-Tarraga A.-M."/>
            <person name="Challis G.L."/>
            <person name="Thomson N.R."/>
            <person name="James K.D."/>
            <person name="Harris D.E."/>
            <person name="Quail M.A."/>
            <person name="Kieser H."/>
            <person name="Harper D."/>
            <person name="Bateman A."/>
            <person name="Brown S."/>
            <person name="Chandra G."/>
            <person name="Chen C.W."/>
            <person name="Collins M."/>
            <person name="Cronin A."/>
            <person name="Fraser A."/>
            <person name="Goble A."/>
            <person name="Hidalgo J."/>
            <person name="Hornsby T."/>
            <person name="Howarth S."/>
            <person name="Huang C.-H."/>
            <person name="Kieser T."/>
            <person name="Larke L."/>
            <person name="Murphy L.D."/>
            <person name="Oliver K."/>
            <person name="O'Neil S."/>
            <person name="Rabbinowitsch E."/>
            <person name="Rajandream M.A."/>
            <person name="Rutherford K.M."/>
            <person name="Rutter S."/>
            <person name="Seeger K."/>
            <person name="Saunders D."/>
            <person name="Sharp S."/>
            <person name="Squares R."/>
            <person name="Squares S."/>
            <person name="Taylor K."/>
            <person name="Warren T."/>
            <person name="Wietzorrek A."/>
            <person name="Woodward J.R."/>
            <person name="Barrell B.G."/>
            <person name="Parkhill J."/>
            <person name="Hopwood D.A."/>
        </authorList>
    </citation>
    <scope>NUCLEOTIDE SEQUENCE [LARGE SCALE GENOMIC DNA]</scope>
    <source>
        <strain evidence="10">ATCC BAA-471 / A3(2) / M145</strain>
    </source>
</reference>
<reference evidence="7" key="2">
    <citation type="journal article" date="2014" name="Ann. Microbiol.">
        <title>D-Amino acid oxidase of Streptomyces coelicolor and the effect of D-amino acids on the bacterium.</title>
        <authorList>
            <person name="Saito Y."/>
            <person name="Takahashi S."/>
            <person name="Kobayashi M."/>
            <person name="Abe K."/>
            <person name="Kera Y."/>
        </authorList>
    </citation>
    <scope>FUNCTION</scope>
    <scope>CATALYTIC ACTIVITY</scope>
    <scope>INDUCTION</scope>
    <scope>DISRUPTION PHENOTYPE</scope>
</reference>
<organism evidence="10">
    <name type="scientific">Streptomyces coelicolor (strain ATCC BAA-471 / A3(2) / M145)</name>
    <dbReference type="NCBI Taxonomy" id="100226"/>
    <lineage>
        <taxon>Bacteria</taxon>
        <taxon>Bacillati</taxon>
        <taxon>Actinomycetota</taxon>
        <taxon>Actinomycetes</taxon>
        <taxon>Kitasatosporales</taxon>
        <taxon>Streptomycetaceae</taxon>
        <taxon>Streptomyces</taxon>
        <taxon>Streptomyces albidoflavus group</taxon>
    </lineage>
</organism>
<name>DAO_STRCO</name>
<keyword id="KW-0134">Cell wall</keyword>
<keyword id="KW-0963">Cytoplasm</keyword>
<keyword id="KW-0274">FAD</keyword>
<keyword id="KW-0285">Flavoprotein</keyword>
<keyword id="KW-0560">Oxidoreductase</keyword>
<keyword id="KW-1185">Reference proteome</keyword>
<keyword id="KW-0964">Secreted</keyword>
<feature type="chain" id="PRO_0000460377" description="D-amino-acid oxidase">
    <location>
        <begin position="1"/>
        <end position="320"/>
    </location>
</feature>
<feature type="binding site" evidence="3">
    <location>
        <position position="18"/>
    </location>
    <ligand>
        <name>FAD</name>
        <dbReference type="ChEBI" id="CHEBI:57692"/>
    </ligand>
</feature>
<feature type="binding site" evidence="3">
    <location>
        <position position="19"/>
    </location>
    <ligand>
        <name>FAD</name>
        <dbReference type="ChEBI" id="CHEBI:57692"/>
    </ligand>
</feature>
<feature type="binding site" evidence="3">
    <location>
        <position position="20"/>
    </location>
    <ligand>
        <name>FAD</name>
        <dbReference type="ChEBI" id="CHEBI:57692"/>
    </ligand>
</feature>
<feature type="binding site" evidence="3">
    <location>
        <position position="21"/>
    </location>
    <ligand>
        <name>FAD</name>
        <dbReference type="ChEBI" id="CHEBI:57692"/>
    </ligand>
</feature>
<feature type="binding site" evidence="3">
    <location>
        <position position="47"/>
    </location>
    <ligand>
        <name>FAD</name>
        <dbReference type="ChEBI" id="CHEBI:57692"/>
    </ligand>
</feature>
<feature type="binding site" evidence="3">
    <location>
        <position position="48"/>
    </location>
    <ligand>
        <name>FAD</name>
        <dbReference type="ChEBI" id="CHEBI:57692"/>
    </ligand>
</feature>
<feature type="binding site" evidence="3">
    <location>
        <position position="49"/>
    </location>
    <ligand>
        <name>FAD</name>
        <dbReference type="ChEBI" id="CHEBI:57692"/>
    </ligand>
</feature>
<feature type="binding site" evidence="2">
    <location>
        <position position="53"/>
    </location>
    <ligand>
        <name>FAD</name>
        <dbReference type="ChEBI" id="CHEBI:57692"/>
    </ligand>
</feature>
<feature type="binding site" evidence="3">
    <location>
        <position position="54"/>
    </location>
    <ligand>
        <name>FAD</name>
        <dbReference type="ChEBI" id="CHEBI:57692"/>
    </ligand>
</feature>
<feature type="binding site" evidence="3">
    <location>
        <position position="55"/>
    </location>
    <ligand>
        <name>FAD</name>
        <dbReference type="ChEBI" id="CHEBI:57692"/>
    </ligand>
</feature>
<feature type="binding site" evidence="3">
    <location>
        <position position="161"/>
    </location>
    <ligand>
        <name>FAD</name>
        <dbReference type="ChEBI" id="CHEBI:57692"/>
    </ligand>
</feature>
<feature type="binding site" evidence="3">
    <location>
        <position position="176"/>
    </location>
    <ligand>
        <name>FAD</name>
        <dbReference type="ChEBI" id="CHEBI:57692"/>
    </ligand>
</feature>
<feature type="binding site" evidence="2">
    <location>
        <position position="220"/>
    </location>
    <ligand>
        <name>D-proline</name>
        <dbReference type="ChEBI" id="CHEBI:57726"/>
    </ligand>
</feature>
<feature type="binding site" evidence="3">
    <location>
        <position position="220"/>
    </location>
    <ligand>
        <name>D-serine</name>
        <dbReference type="ChEBI" id="CHEBI:35247"/>
    </ligand>
</feature>
<feature type="binding site" evidence="2">
    <location>
        <position position="275"/>
    </location>
    <ligand>
        <name>D-proline</name>
        <dbReference type="ChEBI" id="CHEBI:57726"/>
    </ligand>
</feature>
<feature type="binding site" evidence="3">
    <location>
        <position position="275"/>
    </location>
    <ligand>
        <name>D-serine</name>
        <dbReference type="ChEBI" id="CHEBI:35247"/>
    </ligand>
</feature>
<feature type="binding site" evidence="3">
    <location>
        <position position="275"/>
    </location>
    <ligand>
        <name>FAD</name>
        <dbReference type="ChEBI" id="CHEBI:57692"/>
    </ligand>
</feature>
<feature type="binding site" evidence="3">
    <location>
        <position position="301"/>
    </location>
    <ligand>
        <name>FAD</name>
        <dbReference type="ChEBI" id="CHEBI:57692"/>
    </ligand>
</feature>
<feature type="binding site" evidence="2">
    <location>
        <position position="302"/>
    </location>
    <ligand>
        <name>D-proline</name>
        <dbReference type="ChEBI" id="CHEBI:57726"/>
    </ligand>
</feature>
<feature type="binding site" evidence="3">
    <location>
        <position position="302"/>
    </location>
    <ligand>
        <name>D-serine</name>
        <dbReference type="ChEBI" id="CHEBI:35247"/>
    </ligand>
</feature>
<feature type="binding site" evidence="3">
    <location>
        <position position="302"/>
    </location>
    <ligand>
        <name>FAD</name>
        <dbReference type="ChEBI" id="CHEBI:57692"/>
    </ligand>
</feature>
<feature type="binding site" evidence="3">
    <location>
        <position position="304"/>
    </location>
    <ligand>
        <name>FAD</name>
        <dbReference type="ChEBI" id="CHEBI:57692"/>
    </ligand>
</feature>
<feature type="binding site" evidence="3">
    <location>
        <position position="306"/>
    </location>
    <ligand>
        <name>FAD</name>
        <dbReference type="ChEBI" id="CHEBI:57692"/>
    </ligand>
</feature>
<evidence type="ECO:0000250" key="1">
    <source>
        <dbReference type="UniProtKB" id="A5U3S4"/>
    </source>
</evidence>
<evidence type="ECO:0000250" key="2">
    <source>
        <dbReference type="UniProtKB" id="P00371"/>
    </source>
</evidence>
<evidence type="ECO:0000250" key="3">
    <source>
        <dbReference type="UniProtKB" id="P14920"/>
    </source>
</evidence>
<evidence type="ECO:0000250" key="4">
    <source>
        <dbReference type="UniProtKB" id="Q1AYM8"/>
    </source>
</evidence>
<evidence type="ECO:0000269" key="5">
    <source ref="2"/>
</evidence>
<evidence type="ECO:0000303" key="6">
    <source ref="2"/>
</evidence>
<evidence type="ECO:0000305" key="7"/>
<evidence type="ECO:0000305" key="8">
    <source ref="2"/>
</evidence>
<evidence type="ECO:0000312" key="9">
    <source>
        <dbReference type="EMBL" id="CAB40690.1"/>
    </source>
</evidence>
<evidence type="ECO:0000312" key="10">
    <source>
        <dbReference type="Proteomes" id="UP000001973"/>
    </source>
</evidence>
<protein>
    <recommendedName>
        <fullName evidence="6">D-amino-acid oxidase</fullName>
        <shortName evidence="7">DAAO</shortName>
        <shortName evidence="7">DAMOX</shortName>
        <shortName evidence="6">DAO</shortName>
        <ecNumber evidence="8">1.4.3.3</ecNumber>
    </recommendedName>
</protein>
<accession>Q9X7P6</accession>
<comment type="function">
    <text evidence="5">Catalyzes the oxidative deamination of D-amino acids with broad substrate specificity.</text>
</comment>
<comment type="catalytic activity">
    <reaction evidence="8">
        <text>a D-alpha-amino acid + O2 + H2O = a 2-oxocarboxylate + H2O2 + NH4(+)</text>
        <dbReference type="Rhea" id="RHEA:21816"/>
        <dbReference type="ChEBI" id="CHEBI:15377"/>
        <dbReference type="ChEBI" id="CHEBI:15379"/>
        <dbReference type="ChEBI" id="CHEBI:16240"/>
        <dbReference type="ChEBI" id="CHEBI:28938"/>
        <dbReference type="ChEBI" id="CHEBI:35179"/>
        <dbReference type="ChEBI" id="CHEBI:59871"/>
        <dbReference type="EC" id="1.4.3.3"/>
    </reaction>
    <physiologicalReaction direction="left-to-right" evidence="8">
        <dbReference type="Rhea" id="RHEA:21817"/>
    </physiologicalReaction>
</comment>
<comment type="catalytic activity">
    <reaction evidence="8">
        <text>D-leucine + O2 + H2O = 4-methyl-2-oxopentanoate + H2O2 + NH4(+)</text>
        <dbReference type="Rhea" id="RHEA:78211"/>
        <dbReference type="ChEBI" id="CHEBI:15377"/>
        <dbReference type="ChEBI" id="CHEBI:15379"/>
        <dbReference type="ChEBI" id="CHEBI:16240"/>
        <dbReference type="ChEBI" id="CHEBI:17865"/>
        <dbReference type="ChEBI" id="CHEBI:28938"/>
        <dbReference type="ChEBI" id="CHEBI:143079"/>
    </reaction>
    <physiologicalReaction direction="left-to-right" evidence="8">
        <dbReference type="Rhea" id="RHEA:78212"/>
    </physiologicalReaction>
</comment>
<comment type="catalytic activity">
    <reaction evidence="8">
        <text>D-valine + O2 + H2O = 3-methyl-2-oxobutanoate + H2O2 + NH4(+)</text>
        <dbReference type="Rhea" id="RHEA:78203"/>
        <dbReference type="ChEBI" id="CHEBI:11851"/>
        <dbReference type="ChEBI" id="CHEBI:15377"/>
        <dbReference type="ChEBI" id="CHEBI:15379"/>
        <dbReference type="ChEBI" id="CHEBI:16240"/>
        <dbReference type="ChEBI" id="CHEBI:28938"/>
        <dbReference type="ChEBI" id="CHEBI:74338"/>
    </reaction>
    <physiologicalReaction direction="left-to-right" evidence="8">
        <dbReference type="Rhea" id="RHEA:78204"/>
    </physiologicalReaction>
</comment>
<comment type="catalytic activity">
    <reaction evidence="8">
        <text>D-isoleucine + O2 + H2O = (R)-3-methyl-2-oxopentanoate + H2O2 + NH4(+)</text>
        <dbReference type="Rhea" id="RHEA:78235"/>
        <dbReference type="ChEBI" id="CHEBI:15377"/>
        <dbReference type="ChEBI" id="CHEBI:15379"/>
        <dbReference type="ChEBI" id="CHEBI:16240"/>
        <dbReference type="ChEBI" id="CHEBI:28938"/>
        <dbReference type="ChEBI" id="CHEBI:193151"/>
        <dbReference type="ChEBI" id="CHEBI:228255"/>
    </reaction>
    <physiologicalReaction direction="left-to-right" evidence="8">
        <dbReference type="Rhea" id="RHEA:78236"/>
    </physiologicalReaction>
</comment>
<comment type="catalytic activity">
    <reaction evidence="8">
        <text>D-methionine + O2 + H2O = 4-methylsulfanyl-2-oxobutanoate + H2O2 + NH4(+)</text>
        <dbReference type="Rhea" id="RHEA:78207"/>
        <dbReference type="ChEBI" id="CHEBI:15377"/>
        <dbReference type="ChEBI" id="CHEBI:15379"/>
        <dbReference type="ChEBI" id="CHEBI:16240"/>
        <dbReference type="ChEBI" id="CHEBI:16723"/>
        <dbReference type="ChEBI" id="CHEBI:28938"/>
        <dbReference type="ChEBI" id="CHEBI:57932"/>
    </reaction>
    <physiologicalReaction direction="left-to-right" evidence="8">
        <dbReference type="Rhea" id="RHEA:78208"/>
    </physiologicalReaction>
</comment>
<comment type="cofactor">
    <cofactor evidence="4">
        <name>FAD</name>
        <dbReference type="ChEBI" id="CHEBI:57692"/>
    </cofactor>
</comment>
<comment type="subcellular location">
    <subcellularLocation>
        <location evidence="1">Cytoplasm</location>
    </subcellularLocation>
    <subcellularLocation>
        <location evidence="1">Secreted</location>
        <location evidence="1">Cell wall</location>
    </subcellularLocation>
</comment>
<comment type="induction">
    <text evidence="5">Not induced when D-valine is added to the growth medium.</text>
</comment>
<comment type="disruption phenotype">
    <text evidence="5">Knockout does not appear to have a significant effect on the assimilation and detoxification of D-valine.</text>
</comment>
<comment type="similarity">
    <text evidence="7">Belongs to the DAMOX/DASOX family.</text>
</comment>